<sequence>MSETAQTTVDQSEVDRFSAMAAEWWSPTGKFRPLHKFNPVRLEYIRNRVCENFGRNPKAHRPLEGLRVLDIGCGGGLLSEPVARMGATVVGADPSEKNIGIASTHARESGVSVDYRAVTAEQLQEAGESFDVILNMEVVEHVANVDLFVTTCAKMVRPGGLMFAATINRTLKARALAIFAAENVLRWLPRGTHQYEKLVRPEELERPIVASGMDIIHRTGVFYNVLQDRWNLSPDMEVNYMMMAKRPAAA</sequence>
<feature type="chain" id="PRO_0000193365" description="Ubiquinone biosynthesis O-methyltransferase">
    <location>
        <begin position="1"/>
        <end position="250"/>
    </location>
</feature>
<feature type="binding site" evidence="1">
    <location>
        <position position="41"/>
    </location>
    <ligand>
        <name>S-adenosyl-L-methionine</name>
        <dbReference type="ChEBI" id="CHEBI:59789"/>
    </ligand>
</feature>
<feature type="binding site" evidence="1">
    <location>
        <position position="72"/>
    </location>
    <ligand>
        <name>S-adenosyl-L-methionine</name>
        <dbReference type="ChEBI" id="CHEBI:59789"/>
    </ligand>
</feature>
<feature type="binding site" evidence="1">
    <location>
        <position position="93"/>
    </location>
    <ligand>
        <name>S-adenosyl-L-methionine</name>
        <dbReference type="ChEBI" id="CHEBI:59789"/>
    </ligand>
</feature>
<feature type="binding site" evidence="1">
    <location>
        <position position="136"/>
    </location>
    <ligand>
        <name>S-adenosyl-L-methionine</name>
        <dbReference type="ChEBI" id="CHEBI:59789"/>
    </ligand>
</feature>
<accession>Q8UA66</accession>
<evidence type="ECO:0000255" key="1">
    <source>
        <dbReference type="HAMAP-Rule" id="MF_00472"/>
    </source>
</evidence>
<comment type="function">
    <text evidence="1">O-methyltransferase that catalyzes the 2 O-methylation steps in the ubiquinone biosynthetic pathway.</text>
</comment>
<comment type="catalytic activity">
    <reaction evidence="1">
        <text>a 3-demethylubiquinol + S-adenosyl-L-methionine = a ubiquinol + S-adenosyl-L-homocysteine + H(+)</text>
        <dbReference type="Rhea" id="RHEA:44380"/>
        <dbReference type="Rhea" id="RHEA-COMP:9566"/>
        <dbReference type="Rhea" id="RHEA-COMP:10914"/>
        <dbReference type="ChEBI" id="CHEBI:15378"/>
        <dbReference type="ChEBI" id="CHEBI:17976"/>
        <dbReference type="ChEBI" id="CHEBI:57856"/>
        <dbReference type="ChEBI" id="CHEBI:59789"/>
        <dbReference type="ChEBI" id="CHEBI:84422"/>
        <dbReference type="EC" id="2.1.1.64"/>
    </reaction>
</comment>
<comment type="catalytic activity">
    <reaction evidence="1">
        <text>a 3-(all-trans-polyprenyl)benzene-1,2-diol + S-adenosyl-L-methionine = a 2-methoxy-6-(all-trans-polyprenyl)phenol + S-adenosyl-L-homocysteine + H(+)</text>
        <dbReference type="Rhea" id="RHEA:31411"/>
        <dbReference type="Rhea" id="RHEA-COMP:9550"/>
        <dbReference type="Rhea" id="RHEA-COMP:9551"/>
        <dbReference type="ChEBI" id="CHEBI:15378"/>
        <dbReference type="ChEBI" id="CHEBI:57856"/>
        <dbReference type="ChEBI" id="CHEBI:59789"/>
        <dbReference type="ChEBI" id="CHEBI:62729"/>
        <dbReference type="ChEBI" id="CHEBI:62731"/>
        <dbReference type="EC" id="2.1.1.222"/>
    </reaction>
</comment>
<comment type="pathway">
    <text evidence="1">Cofactor biosynthesis; ubiquinone biosynthesis.</text>
</comment>
<comment type="similarity">
    <text evidence="1">Belongs to the methyltransferase superfamily. UbiG/COQ3 family.</text>
</comment>
<dbReference type="EC" id="2.1.1.222" evidence="1"/>
<dbReference type="EC" id="2.1.1.64" evidence="1"/>
<dbReference type="EMBL" id="AE007870">
    <property type="protein sequence ID" value="AAK89887.1"/>
    <property type="molecule type" value="Genomic_DNA"/>
</dbReference>
<dbReference type="PIR" id="AC2988">
    <property type="entry name" value="AC2988"/>
</dbReference>
<dbReference type="PIR" id="E98295">
    <property type="entry name" value="E98295"/>
</dbReference>
<dbReference type="RefSeq" id="NP_357102.1">
    <property type="nucleotide sequence ID" value="NC_003063.2"/>
</dbReference>
<dbReference type="RefSeq" id="WP_006315751.1">
    <property type="nucleotide sequence ID" value="NC_003063.2"/>
</dbReference>
<dbReference type="SMR" id="Q8UA66"/>
<dbReference type="STRING" id="176299.Atu3508"/>
<dbReference type="EnsemblBacteria" id="AAK89887">
    <property type="protein sequence ID" value="AAK89887"/>
    <property type="gene ID" value="Atu3508"/>
</dbReference>
<dbReference type="GeneID" id="1135382"/>
<dbReference type="KEGG" id="atu:Atu3508"/>
<dbReference type="PATRIC" id="fig|176299.10.peg.3348"/>
<dbReference type="eggNOG" id="COG2227">
    <property type="taxonomic scope" value="Bacteria"/>
</dbReference>
<dbReference type="HOGENOM" id="CLU_042432_0_0_5"/>
<dbReference type="OrthoDB" id="9801538at2"/>
<dbReference type="PhylomeDB" id="Q8UA66"/>
<dbReference type="BioCyc" id="AGRO:ATU3508-MONOMER"/>
<dbReference type="UniPathway" id="UPA00232"/>
<dbReference type="Proteomes" id="UP000000813">
    <property type="component" value="Chromosome linear"/>
</dbReference>
<dbReference type="GO" id="GO:0102208">
    <property type="term" value="F:2-polyprenyl-6-hydroxyphenol methylase activity"/>
    <property type="evidence" value="ECO:0007669"/>
    <property type="project" value="UniProtKB-EC"/>
</dbReference>
<dbReference type="GO" id="GO:0061542">
    <property type="term" value="F:3-demethylubiquinol 3-O-methyltransferase activity"/>
    <property type="evidence" value="ECO:0007669"/>
    <property type="project" value="UniProtKB-UniRule"/>
</dbReference>
<dbReference type="GO" id="GO:0010420">
    <property type="term" value="F:polyprenyldihydroxybenzoate methyltransferase activity"/>
    <property type="evidence" value="ECO:0007669"/>
    <property type="project" value="InterPro"/>
</dbReference>
<dbReference type="GO" id="GO:0032259">
    <property type="term" value="P:methylation"/>
    <property type="evidence" value="ECO:0007669"/>
    <property type="project" value="UniProtKB-KW"/>
</dbReference>
<dbReference type="CDD" id="cd02440">
    <property type="entry name" value="AdoMet_MTases"/>
    <property type="match status" value="1"/>
</dbReference>
<dbReference type="Gene3D" id="3.40.50.150">
    <property type="entry name" value="Vaccinia Virus protein VP39"/>
    <property type="match status" value="1"/>
</dbReference>
<dbReference type="HAMAP" id="MF_00472">
    <property type="entry name" value="UbiG"/>
    <property type="match status" value="1"/>
</dbReference>
<dbReference type="InterPro" id="IPR013216">
    <property type="entry name" value="Methyltransf_11"/>
</dbReference>
<dbReference type="InterPro" id="IPR029063">
    <property type="entry name" value="SAM-dependent_MTases_sf"/>
</dbReference>
<dbReference type="InterPro" id="IPR010233">
    <property type="entry name" value="UbiG_MeTrfase"/>
</dbReference>
<dbReference type="NCBIfam" id="TIGR01983">
    <property type="entry name" value="UbiG"/>
    <property type="match status" value="1"/>
</dbReference>
<dbReference type="PANTHER" id="PTHR43464">
    <property type="entry name" value="METHYLTRANSFERASE"/>
    <property type="match status" value="1"/>
</dbReference>
<dbReference type="PANTHER" id="PTHR43464:SF19">
    <property type="entry name" value="UBIQUINONE BIOSYNTHESIS O-METHYLTRANSFERASE, MITOCHONDRIAL"/>
    <property type="match status" value="1"/>
</dbReference>
<dbReference type="Pfam" id="PF08241">
    <property type="entry name" value="Methyltransf_11"/>
    <property type="match status" value="1"/>
</dbReference>
<dbReference type="SUPFAM" id="SSF53335">
    <property type="entry name" value="S-adenosyl-L-methionine-dependent methyltransferases"/>
    <property type="match status" value="1"/>
</dbReference>
<proteinExistence type="inferred from homology"/>
<keyword id="KW-0489">Methyltransferase</keyword>
<keyword id="KW-1185">Reference proteome</keyword>
<keyword id="KW-0949">S-adenosyl-L-methionine</keyword>
<keyword id="KW-0808">Transferase</keyword>
<keyword id="KW-0831">Ubiquinone biosynthesis</keyword>
<protein>
    <recommendedName>
        <fullName evidence="1">Ubiquinone biosynthesis O-methyltransferase</fullName>
    </recommendedName>
    <alternativeName>
        <fullName evidence="1">2-polyprenyl-6-hydroxyphenol methylase</fullName>
        <ecNumber evidence="1">2.1.1.222</ecNumber>
    </alternativeName>
    <alternativeName>
        <fullName evidence="1">3-demethylubiquinone 3-O-methyltransferase</fullName>
        <ecNumber evidence="1">2.1.1.64</ecNumber>
    </alternativeName>
</protein>
<gene>
    <name evidence="1" type="primary">ubiG</name>
    <name type="ordered locus">Atu3508</name>
    <name type="ORF">AGR_L_2640</name>
</gene>
<reference key="1">
    <citation type="journal article" date="2001" name="Science">
        <title>The genome of the natural genetic engineer Agrobacterium tumefaciens C58.</title>
        <authorList>
            <person name="Wood D.W."/>
            <person name="Setubal J.C."/>
            <person name="Kaul R."/>
            <person name="Monks D.E."/>
            <person name="Kitajima J.P."/>
            <person name="Okura V.K."/>
            <person name="Zhou Y."/>
            <person name="Chen L."/>
            <person name="Wood G.E."/>
            <person name="Almeida N.F. Jr."/>
            <person name="Woo L."/>
            <person name="Chen Y."/>
            <person name="Paulsen I.T."/>
            <person name="Eisen J.A."/>
            <person name="Karp P.D."/>
            <person name="Bovee D. Sr."/>
            <person name="Chapman P."/>
            <person name="Clendenning J."/>
            <person name="Deatherage G."/>
            <person name="Gillet W."/>
            <person name="Grant C."/>
            <person name="Kutyavin T."/>
            <person name="Levy R."/>
            <person name="Li M.-J."/>
            <person name="McClelland E."/>
            <person name="Palmieri A."/>
            <person name="Raymond C."/>
            <person name="Rouse G."/>
            <person name="Saenphimmachak C."/>
            <person name="Wu Z."/>
            <person name="Romero P."/>
            <person name="Gordon D."/>
            <person name="Zhang S."/>
            <person name="Yoo H."/>
            <person name="Tao Y."/>
            <person name="Biddle P."/>
            <person name="Jung M."/>
            <person name="Krespan W."/>
            <person name="Perry M."/>
            <person name="Gordon-Kamm B."/>
            <person name="Liao L."/>
            <person name="Kim S."/>
            <person name="Hendrick C."/>
            <person name="Zhao Z.-Y."/>
            <person name="Dolan M."/>
            <person name="Chumley F."/>
            <person name="Tingey S.V."/>
            <person name="Tomb J.-F."/>
            <person name="Gordon M.P."/>
            <person name="Olson M.V."/>
            <person name="Nester E.W."/>
        </authorList>
    </citation>
    <scope>NUCLEOTIDE SEQUENCE [LARGE SCALE GENOMIC DNA]</scope>
    <source>
        <strain>C58 / ATCC 33970</strain>
    </source>
</reference>
<reference key="2">
    <citation type="journal article" date="2001" name="Science">
        <title>Genome sequence of the plant pathogen and biotechnology agent Agrobacterium tumefaciens C58.</title>
        <authorList>
            <person name="Goodner B."/>
            <person name="Hinkle G."/>
            <person name="Gattung S."/>
            <person name="Miller N."/>
            <person name="Blanchard M."/>
            <person name="Qurollo B."/>
            <person name="Goldman B.S."/>
            <person name="Cao Y."/>
            <person name="Askenazi M."/>
            <person name="Halling C."/>
            <person name="Mullin L."/>
            <person name="Houmiel K."/>
            <person name="Gordon J."/>
            <person name="Vaudin M."/>
            <person name="Iartchouk O."/>
            <person name="Epp A."/>
            <person name="Liu F."/>
            <person name="Wollam C."/>
            <person name="Allinger M."/>
            <person name="Doughty D."/>
            <person name="Scott C."/>
            <person name="Lappas C."/>
            <person name="Markelz B."/>
            <person name="Flanagan C."/>
            <person name="Crowell C."/>
            <person name="Gurson J."/>
            <person name="Lomo C."/>
            <person name="Sear C."/>
            <person name="Strub G."/>
            <person name="Cielo C."/>
            <person name="Slater S."/>
        </authorList>
    </citation>
    <scope>NUCLEOTIDE SEQUENCE [LARGE SCALE GENOMIC DNA]</scope>
    <source>
        <strain>C58 / ATCC 33970</strain>
    </source>
</reference>
<organism>
    <name type="scientific">Agrobacterium fabrum (strain C58 / ATCC 33970)</name>
    <name type="common">Agrobacterium tumefaciens (strain C58)</name>
    <dbReference type="NCBI Taxonomy" id="176299"/>
    <lineage>
        <taxon>Bacteria</taxon>
        <taxon>Pseudomonadati</taxon>
        <taxon>Pseudomonadota</taxon>
        <taxon>Alphaproteobacteria</taxon>
        <taxon>Hyphomicrobiales</taxon>
        <taxon>Rhizobiaceae</taxon>
        <taxon>Rhizobium/Agrobacterium group</taxon>
        <taxon>Agrobacterium</taxon>
        <taxon>Agrobacterium tumefaciens complex</taxon>
    </lineage>
</organism>
<name>UBIG_AGRFC</name>